<name>RS5_GEOKA</name>
<gene>
    <name evidence="1" type="primary">rpsE</name>
    <name type="ordered locus">GK0123</name>
</gene>
<dbReference type="EMBL" id="BA000043">
    <property type="protein sequence ID" value="BAD74408.1"/>
    <property type="molecule type" value="Genomic_DNA"/>
</dbReference>
<dbReference type="RefSeq" id="WP_011229636.1">
    <property type="nucleotide sequence ID" value="NC_006510.1"/>
</dbReference>
<dbReference type="SMR" id="Q5L3S2"/>
<dbReference type="STRING" id="235909.GK0123"/>
<dbReference type="GeneID" id="32062111"/>
<dbReference type="KEGG" id="gka:GK0123"/>
<dbReference type="eggNOG" id="COG0098">
    <property type="taxonomic scope" value="Bacteria"/>
</dbReference>
<dbReference type="HOGENOM" id="CLU_065898_2_2_9"/>
<dbReference type="Proteomes" id="UP000001172">
    <property type="component" value="Chromosome"/>
</dbReference>
<dbReference type="GO" id="GO:0015935">
    <property type="term" value="C:small ribosomal subunit"/>
    <property type="evidence" value="ECO:0007669"/>
    <property type="project" value="InterPro"/>
</dbReference>
<dbReference type="GO" id="GO:0019843">
    <property type="term" value="F:rRNA binding"/>
    <property type="evidence" value="ECO:0007669"/>
    <property type="project" value="UniProtKB-UniRule"/>
</dbReference>
<dbReference type="GO" id="GO:0003735">
    <property type="term" value="F:structural constituent of ribosome"/>
    <property type="evidence" value="ECO:0007669"/>
    <property type="project" value="InterPro"/>
</dbReference>
<dbReference type="GO" id="GO:0006412">
    <property type="term" value="P:translation"/>
    <property type="evidence" value="ECO:0007669"/>
    <property type="project" value="UniProtKB-UniRule"/>
</dbReference>
<dbReference type="FunFam" id="3.30.160.20:FF:000001">
    <property type="entry name" value="30S ribosomal protein S5"/>
    <property type="match status" value="1"/>
</dbReference>
<dbReference type="FunFam" id="3.30.230.10:FF:000002">
    <property type="entry name" value="30S ribosomal protein S5"/>
    <property type="match status" value="1"/>
</dbReference>
<dbReference type="Gene3D" id="3.30.160.20">
    <property type="match status" value="1"/>
</dbReference>
<dbReference type="Gene3D" id="3.30.230.10">
    <property type="match status" value="1"/>
</dbReference>
<dbReference type="HAMAP" id="MF_01307_B">
    <property type="entry name" value="Ribosomal_uS5_B"/>
    <property type="match status" value="1"/>
</dbReference>
<dbReference type="InterPro" id="IPR020568">
    <property type="entry name" value="Ribosomal_Su5_D2-typ_SF"/>
</dbReference>
<dbReference type="InterPro" id="IPR000851">
    <property type="entry name" value="Ribosomal_uS5"/>
</dbReference>
<dbReference type="InterPro" id="IPR005712">
    <property type="entry name" value="Ribosomal_uS5_bac-type"/>
</dbReference>
<dbReference type="InterPro" id="IPR005324">
    <property type="entry name" value="Ribosomal_uS5_C"/>
</dbReference>
<dbReference type="InterPro" id="IPR013810">
    <property type="entry name" value="Ribosomal_uS5_N"/>
</dbReference>
<dbReference type="InterPro" id="IPR018192">
    <property type="entry name" value="Ribosomal_uS5_N_CS"/>
</dbReference>
<dbReference type="InterPro" id="IPR014721">
    <property type="entry name" value="Ribsml_uS5_D2-typ_fold_subgr"/>
</dbReference>
<dbReference type="NCBIfam" id="TIGR01021">
    <property type="entry name" value="rpsE_bact"/>
    <property type="match status" value="1"/>
</dbReference>
<dbReference type="PANTHER" id="PTHR48277">
    <property type="entry name" value="MITOCHONDRIAL RIBOSOMAL PROTEIN S5"/>
    <property type="match status" value="1"/>
</dbReference>
<dbReference type="PANTHER" id="PTHR48277:SF1">
    <property type="entry name" value="MITOCHONDRIAL RIBOSOMAL PROTEIN S5"/>
    <property type="match status" value="1"/>
</dbReference>
<dbReference type="Pfam" id="PF00333">
    <property type="entry name" value="Ribosomal_S5"/>
    <property type="match status" value="1"/>
</dbReference>
<dbReference type="Pfam" id="PF03719">
    <property type="entry name" value="Ribosomal_S5_C"/>
    <property type="match status" value="1"/>
</dbReference>
<dbReference type="SUPFAM" id="SSF54768">
    <property type="entry name" value="dsRNA-binding domain-like"/>
    <property type="match status" value="1"/>
</dbReference>
<dbReference type="SUPFAM" id="SSF54211">
    <property type="entry name" value="Ribosomal protein S5 domain 2-like"/>
    <property type="match status" value="1"/>
</dbReference>
<dbReference type="PROSITE" id="PS00585">
    <property type="entry name" value="RIBOSOMAL_S5"/>
    <property type="match status" value="1"/>
</dbReference>
<dbReference type="PROSITE" id="PS50881">
    <property type="entry name" value="S5_DSRBD"/>
    <property type="match status" value="1"/>
</dbReference>
<proteinExistence type="inferred from homology"/>
<comment type="function">
    <text evidence="1">With S4 and S12 plays an important role in translational accuracy.</text>
</comment>
<comment type="function">
    <text evidence="1">Located at the back of the 30S subunit body where it stabilizes the conformation of the head with respect to the body.</text>
</comment>
<comment type="subunit">
    <text evidence="1">Part of the 30S ribosomal subunit. Contacts proteins S4 and S8.</text>
</comment>
<comment type="domain">
    <text>The N-terminal domain interacts with the head of the 30S subunit; the C-terminal domain interacts with the body and contacts protein S4. The interaction surface between S4 and S5 is involved in control of translational fidelity.</text>
</comment>
<comment type="similarity">
    <text evidence="1">Belongs to the universal ribosomal protein uS5 family.</text>
</comment>
<protein>
    <recommendedName>
        <fullName evidence="1">Small ribosomal subunit protein uS5</fullName>
    </recommendedName>
    <alternativeName>
        <fullName evidence="2">30S ribosomal protein S5</fullName>
    </alternativeName>
</protein>
<keyword id="KW-1185">Reference proteome</keyword>
<keyword id="KW-0687">Ribonucleoprotein</keyword>
<keyword id="KW-0689">Ribosomal protein</keyword>
<keyword id="KW-0694">RNA-binding</keyword>
<keyword id="KW-0699">rRNA-binding</keyword>
<organism>
    <name type="scientific">Geobacillus kaustophilus (strain HTA426)</name>
    <dbReference type="NCBI Taxonomy" id="235909"/>
    <lineage>
        <taxon>Bacteria</taxon>
        <taxon>Bacillati</taxon>
        <taxon>Bacillota</taxon>
        <taxon>Bacilli</taxon>
        <taxon>Bacillales</taxon>
        <taxon>Anoxybacillaceae</taxon>
        <taxon>Geobacillus</taxon>
        <taxon>Geobacillus thermoleovorans group</taxon>
    </lineage>
</organism>
<reference key="1">
    <citation type="journal article" date="2004" name="Nucleic Acids Res.">
        <title>Thermoadaptation trait revealed by the genome sequence of thermophilic Geobacillus kaustophilus.</title>
        <authorList>
            <person name="Takami H."/>
            <person name="Takaki Y."/>
            <person name="Chee G.-J."/>
            <person name="Nishi S."/>
            <person name="Shimamura S."/>
            <person name="Suzuki H."/>
            <person name="Matsui S."/>
            <person name="Uchiyama I."/>
        </authorList>
    </citation>
    <scope>NUCLEOTIDE SEQUENCE [LARGE SCALE GENOMIC DNA]</scope>
    <source>
        <strain>HTA426</strain>
    </source>
</reference>
<feature type="chain" id="PRO_0000131518" description="Small ribosomal subunit protein uS5">
    <location>
        <begin position="1"/>
        <end position="166"/>
    </location>
</feature>
<feature type="domain" description="S5 DRBM" evidence="1">
    <location>
        <begin position="11"/>
        <end position="74"/>
    </location>
</feature>
<accession>Q5L3S2</accession>
<sequence length="166" mass="17657">MRRIDPNKLELEERVVAVNRVAKVVKGGRRLRFSALVVVGDKNGHVGFGTGKAQEVPEAIRKAIEDAKKNLIEVPIVGTTIPHEVIGHFGAGEIILKPASEGTGVIAGGPARAVLELAGISDILSKSIGSNTPINMVRATFDGLKQLKRAEDVARLRGKTVEELLG</sequence>
<evidence type="ECO:0000255" key="1">
    <source>
        <dbReference type="HAMAP-Rule" id="MF_01307"/>
    </source>
</evidence>
<evidence type="ECO:0000305" key="2"/>